<evidence type="ECO:0000256" key="1">
    <source>
        <dbReference type="SAM" id="MobiDB-lite"/>
    </source>
</evidence>
<organism>
    <name type="scientific">Mycobacterium tuberculosis (strain ATCC 25618 / H37Rv)</name>
    <dbReference type="NCBI Taxonomy" id="83332"/>
    <lineage>
        <taxon>Bacteria</taxon>
        <taxon>Bacillati</taxon>
        <taxon>Actinomycetota</taxon>
        <taxon>Actinomycetes</taxon>
        <taxon>Mycobacteriales</taxon>
        <taxon>Mycobacteriaceae</taxon>
        <taxon>Mycobacterium</taxon>
        <taxon>Mycobacterium tuberculosis complex</taxon>
    </lineage>
</organism>
<name>Y898_MYCTU</name>
<feature type="chain" id="PRO_0000103739" description="Uncharacterized protein Rv0898c">
    <location>
        <begin position="1"/>
        <end position="87"/>
    </location>
</feature>
<feature type="region of interest" description="Disordered" evidence="1">
    <location>
        <begin position="67"/>
        <end position="87"/>
    </location>
</feature>
<reference key="1">
    <citation type="journal article" date="1998" name="Nature">
        <title>Deciphering the biology of Mycobacterium tuberculosis from the complete genome sequence.</title>
        <authorList>
            <person name="Cole S.T."/>
            <person name="Brosch R."/>
            <person name="Parkhill J."/>
            <person name="Garnier T."/>
            <person name="Churcher C.M."/>
            <person name="Harris D.E."/>
            <person name="Gordon S.V."/>
            <person name="Eiglmeier K."/>
            <person name="Gas S."/>
            <person name="Barry C.E. III"/>
            <person name="Tekaia F."/>
            <person name="Badcock K."/>
            <person name="Basham D."/>
            <person name="Brown D."/>
            <person name="Chillingworth T."/>
            <person name="Connor R."/>
            <person name="Davies R.M."/>
            <person name="Devlin K."/>
            <person name="Feltwell T."/>
            <person name="Gentles S."/>
            <person name="Hamlin N."/>
            <person name="Holroyd S."/>
            <person name="Hornsby T."/>
            <person name="Jagels K."/>
            <person name="Krogh A."/>
            <person name="McLean J."/>
            <person name="Moule S."/>
            <person name="Murphy L.D."/>
            <person name="Oliver S."/>
            <person name="Osborne J."/>
            <person name="Quail M.A."/>
            <person name="Rajandream M.A."/>
            <person name="Rogers J."/>
            <person name="Rutter S."/>
            <person name="Seeger K."/>
            <person name="Skelton S."/>
            <person name="Squares S."/>
            <person name="Squares R."/>
            <person name="Sulston J.E."/>
            <person name="Taylor K."/>
            <person name="Whitehead S."/>
            <person name="Barrell B.G."/>
        </authorList>
    </citation>
    <scope>NUCLEOTIDE SEQUENCE [LARGE SCALE GENOMIC DNA]</scope>
    <source>
        <strain>ATCC 25618 / H37Rv</strain>
    </source>
</reference>
<reference key="2">
    <citation type="journal article" date="2011" name="Mol. Cell. Proteomics">
        <title>Proteogenomic analysis of Mycobacterium tuberculosis by high resolution mass spectrometry.</title>
        <authorList>
            <person name="Kelkar D.S."/>
            <person name="Kumar D."/>
            <person name="Kumar P."/>
            <person name="Balakrishnan L."/>
            <person name="Muthusamy B."/>
            <person name="Yadav A.K."/>
            <person name="Shrivastava P."/>
            <person name="Marimuthu A."/>
            <person name="Anand S."/>
            <person name="Sundaram H."/>
            <person name="Kingsbury R."/>
            <person name="Harsha H.C."/>
            <person name="Nair B."/>
            <person name="Prasad T.S."/>
            <person name="Chauhan D.S."/>
            <person name="Katoch K."/>
            <person name="Katoch V.M."/>
            <person name="Kumar P."/>
            <person name="Chaerkady R."/>
            <person name="Ramachandran S."/>
            <person name="Dash D."/>
            <person name="Pandey A."/>
        </authorList>
    </citation>
    <scope>IDENTIFICATION BY MASS SPECTROMETRY [LARGE SCALE ANALYSIS]</scope>
    <source>
        <strain>ATCC 25618 / H37Rv</strain>
    </source>
</reference>
<keyword id="KW-1185">Reference proteome</keyword>
<sequence length="87" mass="9920">MGKGRKPTDSETLAHIRDLVAEEKALRAQLRHGGISESEEQQQLRRIEIELDQCWDLLRQRRALRQTGGDPREAVVRPADQVEGYTG</sequence>
<protein>
    <recommendedName>
        <fullName>Uncharacterized protein Rv0898c</fullName>
    </recommendedName>
</protein>
<dbReference type="EMBL" id="AL123456">
    <property type="protein sequence ID" value="CCP43646.1"/>
    <property type="molecule type" value="Genomic_DNA"/>
</dbReference>
<dbReference type="PIR" id="G70782">
    <property type="entry name" value="G70782"/>
</dbReference>
<dbReference type="RefSeq" id="NP_215413.1">
    <property type="nucleotide sequence ID" value="NC_000962.3"/>
</dbReference>
<dbReference type="RefSeq" id="WP_003404673.1">
    <property type="nucleotide sequence ID" value="NZ_NVQJ01000001.1"/>
</dbReference>
<dbReference type="SMR" id="P9WKP5"/>
<dbReference type="STRING" id="83332.Rv0898c"/>
<dbReference type="PaxDb" id="83332-Rv0898c"/>
<dbReference type="DNASU" id="885206"/>
<dbReference type="GeneID" id="885206"/>
<dbReference type="KEGG" id="mtu:Rv0898c"/>
<dbReference type="KEGG" id="mtv:RVBD_0898c"/>
<dbReference type="TubercuList" id="Rv0898c"/>
<dbReference type="eggNOG" id="ENOG5032YIY">
    <property type="taxonomic scope" value="Bacteria"/>
</dbReference>
<dbReference type="InParanoid" id="P9WKP5"/>
<dbReference type="OrthoDB" id="7376174at2"/>
<dbReference type="Proteomes" id="UP000001584">
    <property type="component" value="Chromosome"/>
</dbReference>
<dbReference type="InterPro" id="IPR020311">
    <property type="entry name" value="Uncharacterised_Rv0898c"/>
</dbReference>
<dbReference type="Pfam" id="PF10944">
    <property type="entry name" value="DUF2630"/>
    <property type="match status" value="1"/>
</dbReference>
<accession>P9WKP5</accession>
<accession>L0T584</accession>
<accession>P64753</accession>
<accession>Q10566</accession>
<gene>
    <name type="ordered locus">Rv0898c</name>
    <name type="ORF">MTCY31.26c</name>
</gene>
<proteinExistence type="evidence at protein level"/>